<feature type="chain" id="PRO_1000051868" description="Small ribosomal subunit protein uS13">
    <location>
        <begin position="1"/>
        <end position="121"/>
    </location>
</feature>
<feature type="region of interest" description="Disordered" evidence="2">
    <location>
        <begin position="94"/>
        <end position="121"/>
    </location>
</feature>
<gene>
    <name evidence="1" type="primary">rpsM</name>
    <name type="ordered locus">BMA10229_A1947</name>
</gene>
<organism>
    <name type="scientific">Burkholderia mallei (strain NCTC 10229)</name>
    <dbReference type="NCBI Taxonomy" id="412022"/>
    <lineage>
        <taxon>Bacteria</taxon>
        <taxon>Pseudomonadati</taxon>
        <taxon>Pseudomonadota</taxon>
        <taxon>Betaproteobacteria</taxon>
        <taxon>Burkholderiales</taxon>
        <taxon>Burkholderiaceae</taxon>
        <taxon>Burkholderia</taxon>
        <taxon>pseudomallei group</taxon>
    </lineage>
</organism>
<proteinExistence type="inferred from homology"/>
<reference key="1">
    <citation type="journal article" date="2010" name="Genome Biol. Evol.">
        <title>Continuing evolution of Burkholderia mallei through genome reduction and large-scale rearrangements.</title>
        <authorList>
            <person name="Losada L."/>
            <person name="Ronning C.M."/>
            <person name="DeShazer D."/>
            <person name="Woods D."/>
            <person name="Fedorova N."/>
            <person name="Kim H.S."/>
            <person name="Shabalina S.A."/>
            <person name="Pearson T.R."/>
            <person name="Brinkac L."/>
            <person name="Tan P."/>
            <person name="Nandi T."/>
            <person name="Crabtree J."/>
            <person name="Badger J."/>
            <person name="Beckstrom-Sternberg S."/>
            <person name="Saqib M."/>
            <person name="Schutzer S.E."/>
            <person name="Keim P."/>
            <person name="Nierman W.C."/>
        </authorList>
    </citation>
    <scope>NUCLEOTIDE SEQUENCE [LARGE SCALE GENOMIC DNA]</scope>
    <source>
        <strain>NCTC 10229</strain>
    </source>
</reference>
<keyword id="KW-0687">Ribonucleoprotein</keyword>
<keyword id="KW-0689">Ribosomal protein</keyword>
<keyword id="KW-0694">RNA-binding</keyword>
<keyword id="KW-0699">rRNA-binding</keyword>
<keyword id="KW-0820">tRNA-binding</keyword>
<dbReference type="EMBL" id="CP000546">
    <property type="protein sequence ID" value="ABN00748.1"/>
    <property type="molecule type" value="Genomic_DNA"/>
</dbReference>
<dbReference type="RefSeq" id="WP_004197938.1">
    <property type="nucleotide sequence ID" value="NC_008836.1"/>
</dbReference>
<dbReference type="SMR" id="A2S7J9"/>
<dbReference type="GeneID" id="93061809"/>
<dbReference type="KEGG" id="bml:BMA10229_A1947"/>
<dbReference type="HOGENOM" id="CLU_103849_1_2_4"/>
<dbReference type="Proteomes" id="UP000002283">
    <property type="component" value="Chromosome I"/>
</dbReference>
<dbReference type="GO" id="GO:0005829">
    <property type="term" value="C:cytosol"/>
    <property type="evidence" value="ECO:0007669"/>
    <property type="project" value="TreeGrafter"/>
</dbReference>
<dbReference type="GO" id="GO:0015935">
    <property type="term" value="C:small ribosomal subunit"/>
    <property type="evidence" value="ECO:0007669"/>
    <property type="project" value="TreeGrafter"/>
</dbReference>
<dbReference type="GO" id="GO:0019843">
    <property type="term" value="F:rRNA binding"/>
    <property type="evidence" value="ECO:0007669"/>
    <property type="project" value="UniProtKB-UniRule"/>
</dbReference>
<dbReference type="GO" id="GO:0003735">
    <property type="term" value="F:structural constituent of ribosome"/>
    <property type="evidence" value="ECO:0007669"/>
    <property type="project" value="InterPro"/>
</dbReference>
<dbReference type="GO" id="GO:0000049">
    <property type="term" value="F:tRNA binding"/>
    <property type="evidence" value="ECO:0007669"/>
    <property type="project" value="UniProtKB-UniRule"/>
</dbReference>
<dbReference type="GO" id="GO:0006412">
    <property type="term" value="P:translation"/>
    <property type="evidence" value="ECO:0007669"/>
    <property type="project" value="UniProtKB-UniRule"/>
</dbReference>
<dbReference type="FunFam" id="1.10.8.50:FF:000001">
    <property type="entry name" value="30S ribosomal protein S13"/>
    <property type="match status" value="1"/>
</dbReference>
<dbReference type="FunFam" id="4.10.910.10:FF:000001">
    <property type="entry name" value="30S ribosomal protein S13"/>
    <property type="match status" value="1"/>
</dbReference>
<dbReference type="Gene3D" id="1.10.8.50">
    <property type="match status" value="1"/>
</dbReference>
<dbReference type="Gene3D" id="4.10.910.10">
    <property type="entry name" value="30s ribosomal protein s13, domain 2"/>
    <property type="match status" value="1"/>
</dbReference>
<dbReference type="HAMAP" id="MF_01315">
    <property type="entry name" value="Ribosomal_uS13"/>
    <property type="match status" value="1"/>
</dbReference>
<dbReference type="InterPro" id="IPR027437">
    <property type="entry name" value="Rbsml_uS13_C"/>
</dbReference>
<dbReference type="InterPro" id="IPR001892">
    <property type="entry name" value="Ribosomal_uS13"/>
</dbReference>
<dbReference type="InterPro" id="IPR010979">
    <property type="entry name" value="Ribosomal_uS13-like_H2TH"/>
</dbReference>
<dbReference type="InterPro" id="IPR019980">
    <property type="entry name" value="Ribosomal_uS13_bac-type"/>
</dbReference>
<dbReference type="InterPro" id="IPR018269">
    <property type="entry name" value="Ribosomal_uS13_CS"/>
</dbReference>
<dbReference type="NCBIfam" id="TIGR03631">
    <property type="entry name" value="uS13_bact"/>
    <property type="match status" value="1"/>
</dbReference>
<dbReference type="PANTHER" id="PTHR10871">
    <property type="entry name" value="30S RIBOSOMAL PROTEIN S13/40S RIBOSOMAL PROTEIN S18"/>
    <property type="match status" value="1"/>
</dbReference>
<dbReference type="PANTHER" id="PTHR10871:SF1">
    <property type="entry name" value="SMALL RIBOSOMAL SUBUNIT PROTEIN US13M"/>
    <property type="match status" value="1"/>
</dbReference>
<dbReference type="Pfam" id="PF00416">
    <property type="entry name" value="Ribosomal_S13"/>
    <property type="match status" value="1"/>
</dbReference>
<dbReference type="PIRSF" id="PIRSF002134">
    <property type="entry name" value="Ribosomal_S13"/>
    <property type="match status" value="1"/>
</dbReference>
<dbReference type="SUPFAM" id="SSF46946">
    <property type="entry name" value="S13-like H2TH domain"/>
    <property type="match status" value="1"/>
</dbReference>
<dbReference type="PROSITE" id="PS00646">
    <property type="entry name" value="RIBOSOMAL_S13_1"/>
    <property type="match status" value="1"/>
</dbReference>
<dbReference type="PROSITE" id="PS50159">
    <property type="entry name" value="RIBOSOMAL_S13_2"/>
    <property type="match status" value="1"/>
</dbReference>
<protein>
    <recommendedName>
        <fullName evidence="1">Small ribosomal subunit protein uS13</fullName>
    </recommendedName>
    <alternativeName>
        <fullName evidence="3">30S ribosomal protein S13</fullName>
    </alternativeName>
</protein>
<name>RS13_BURM9</name>
<evidence type="ECO:0000255" key="1">
    <source>
        <dbReference type="HAMAP-Rule" id="MF_01315"/>
    </source>
</evidence>
<evidence type="ECO:0000256" key="2">
    <source>
        <dbReference type="SAM" id="MobiDB-lite"/>
    </source>
</evidence>
<evidence type="ECO:0000305" key="3"/>
<accession>A2S7J9</accession>
<sequence>MARIAGVNIPNHQHTEIGLTAIFGIGRTRARSICVASGVAFSKKVKDLTDADLEKLREEVGKFVVEGDLRREVTMNIKRLMDLGCYRGVRHRKGLPLRGQRTRTNARTRKGPRRAAQALKK</sequence>
<comment type="function">
    <text evidence="1">Located at the top of the head of the 30S subunit, it contacts several helices of the 16S rRNA. In the 70S ribosome it contacts the 23S rRNA (bridge B1a) and protein L5 of the 50S subunit (bridge B1b), connecting the 2 subunits; these bridges are implicated in subunit movement. Contacts the tRNAs in the A and P-sites.</text>
</comment>
<comment type="subunit">
    <text evidence="1">Part of the 30S ribosomal subunit. Forms a loose heterodimer with protein S19. Forms two bridges to the 50S subunit in the 70S ribosome.</text>
</comment>
<comment type="similarity">
    <text evidence="1">Belongs to the universal ribosomal protein uS13 family.</text>
</comment>